<protein>
    <recommendedName>
        <fullName evidence="1">Ditrans,polycis-undecaprenyl-diphosphate synthase ((2E,6E)-farnesyl-diphosphate specific)</fullName>
        <ecNumber evidence="1">2.5.1.31</ecNumber>
    </recommendedName>
    <alternativeName>
        <fullName evidence="1">Ditrans,polycis-undecaprenylcistransferase</fullName>
    </alternativeName>
    <alternativeName>
        <fullName evidence="1">Undecaprenyl diphosphate synthase</fullName>
        <shortName evidence="1">UDS</shortName>
    </alternativeName>
    <alternativeName>
        <fullName evidence="1">Undecaprenyl pyrophosphate synthase</fullName>
        <shortName evidence="1">UPP synthase</shortName>
    </alternativeName>
</protein>
<sequence length="257" mass="29706">MFILSYHLANLIFFIIFMTSAKENILRHLAIIMDGNGRWAKSRLKPRIFGHRNSVSSVDATIEYCVENNIEMLTLFAFGRDNWLRPAQEVSDLMDLFYKTLKDKTPKLHDNNIVVTVVGDRSRLSNKLIGMIEYSESLTKSNTGLKLRLAVDYAGRWDIVEATRAIAREVDIGKLSVDEIDQNSFAKYLVGGNMPVDLLIRTSGEVRLSDFMLWQLAYAEMYFTDIMWPDFSKQELTRAVEYFYSRQRRFGKSGEQI</sequence>
<proteinExistence type="inferred from homology"/>
<accession>Q5NHX6</accession>
<feature type="chain" id="PRO_0000123614" description="Ditrans,polycis-undecaprenyl-diphosphate synthase ((2E,6E)-farnesyl-diphosphate specific)">
    <location>
        <begin position="1"/>
        <end position="257"/>
    </location>
</feature>
<feature type="active site" evidence="1">
    <location>
        <position position="34"/>
    </location>
</feature>
<feature type="active site" description="Proton acceptor" evidence="1">
    <location>
        <position position="82"/>
    </location>
</feature>
<feature type="binding site" evidence="1">
    <location>
        <position position="34"/>
    </location>
    <ligand>
        <name>Mg(2+)</name>
        <dbReference type="ChEBI" id="CHEBI:18420"/>
    </ligand>
</feature>
<feature type="binding site" evidence="1">
    <location>
        <begin position="35"/>
        <end position="38"/>
    </location>
    <ligand>
        <name>substrate</name>
    </ligand>
</feature>
<feature type="binding site" evidence="1">
    <location>
        <position position="39"/>
    </location>
    <ligand>
        <name>substrate</name>
    </ligand>
</feature>
<feature type="binding site" evidence="1">
    <location>
        <position position="47"/>
    </location>
    <ligand>
        <name>substrate</name>
    </ligand>
</feature>
<feature type="binding site" evidence="1">
    <location>
        <position position="51"/>
    </location>
    <ligand>
        <name>substrate</name>
    </ligand>
</feature>
<feature type="binding site" evidence="1">
    <location>
        <position position="83"/>
    </location>
    <ligand>
        <name>substrate</name>
    </ligand>
</feature>
<feature type="binding site" evidence="1">
    <location>
        <position position="85"/>
    </location>
    <ligand>
        <name>substrate</name>
    </ligand>
</feature>
<feature type="binding site" evidence="1">
    <location>
        <position position="201"/>
    </location>
    <ligand>
        <name>substrate</name>
    </ligand>
</feature>
<feature type="binding site" evidence="1">
    <location>
        <begin position="207"/>
        <end position="209"/>
    </location>
    <ligand>
        <name>substrate</name>
    </ligand>
</feature>
<feature type="binding site" evidence="1">
    <location>
        <position position="220"/>
    </location>
    <ligand>
        <name>Mg(2+)</name>
        <dbReference type="ChEBI" id="CHEBI:18420"/>
    </ligand>
</feature>
<gene>
    <name evidence="1" type="primary">uppS</name>
    <name type="ordered locus">FTT_0317</name>
</gene>
<comment type="function">
    <text evidence="1">Catalyzes the sequential condensation of isopentenyl diphosphate (IPP) with (2E,6E)-farnesyl diphosphate (E,E-FPP) to yield (2Z,6Z,10Z,14Z,18Z,22Z,26Z,30Z,34E,38E)-undecaprenyl diphosphate (di-trans,octa-cis-UPP). UPP is the precursor of glycosyl carrier lipid in the biosynthesis of bacterial cell wall polysaccharide components such as peptidoglycan and lipopolysaccharide.</text>
</comment>
<comment type="catalytic activity">
    <reaction evidence="1">
        <text>8 isopentenyl diphosphate + (2E,6E)-farnesyl diphosphate = di-trans,octa-cis-undecaprenyl diphosphate + 8 diphosphate</text>
        <dbReference type="Rhea" id="RHEA:27551"/>
        <dbReference type="ChEBI" id="CHEBI:33019"/>
        <dbReference type="ChEBI" id="CHEBI:58405"/>
        <dbReference type="ChEBI" id="CHEBI:128769"/>
        <dbReference type="ChEBI" id="CHEBI:175763"/>
        <dbReference type="EC" id="2.5.1.31"/>
    </reaction>
</comment>
<comment type="cofactor">
    <cofactor evidence="1">
        <name>Mg(2+)</name>
        <dbReference type="ChEBI" id="CHEBI:18420"/>
    </cofactor>
    <text evidence="1">Binds 2 magnesium ions per subunit.</text>
</comment>
<comment type="subunit">
    <text evidence="1">Homodimer.</text>
</comment>
<comment type="similarity">
    <text evidence="1">Belongs to the UPP synthase family.</text>
</comment>
<reference key="1">
    <citation type="journal article" date="2005" name="Nat. Genet.">
        <title>The complete genome sequence of Francisella tularensis, the causative agent of tularemia.</title>
        <authorList>
            <person name="Larsson P."/>
            <person name="Oyston P.C.F."/>
            <person name="Chain P."/>
            <person name="Chu M.C."/>
            <person name="Duffield M."/>
            <person name="Fuxelius H.-H."/>
            <person name="Garcia E."/>
            <person name="Haelltorp G."/>
            <person name="Johansson D."/>
            <person name="Isherwood K.E."/>
            <person name="Karp P.D."/>
            <person name="Larsson E."/>
            <person name="Liu Y."/>
            <person name="Michell S."/>
            <person name="Prior J."/>
            <person name="Prior R."/>
            <person name="Malfatti S."/>
            <person name="Sjoestedt A."/>
            <person name="Svensson K."/>
            <person name="Thompson N."/>
            <person name="Vergez L."/>
            <person name="Wagg J.K."/>
            <person name="Wren B.W."/>
            <person name="Lindler L.E."/>
            <person name="Andersson S.G.E."/>
            <person name="Forsman M."/>
            <person name="Titball R.W."/>
        </authorList>
    </citation>
    <scope>NUCLEOTIDE SEQUENCE [LARGE SCALE GENOMIC DNA]</scope>
    <source>
        <strain>SCHU S4 / Schu 4</strain>
    </source>
</reference>
<evidence type="ECO:0000255" key="1">
    <source>
        <dbReference type="HAMAP-Rule" id="MF_01139"/>
    </source>
</evidence>
<keyword id="KW-0133">Cell shape</keyword>
<keyword id="KW-0961">Cell wall biogenesis/degradation</keyword>
<keyword id="KW-0460">Magnesium</keyword>
<keyword id="KW-0479">Metal-binding</keyword>
<keyword id="KW-0573">Peptidoglycan synthesis</keyword>
<keyword id="KW-1185">Reference proteome</keyword>
<keyword id="KW-0808">Transferase</keyword>
<organism>
    <name type="scientific">Francisella tularensis subsp. tularensis (strain SCHU S4 / Schu 4)</name>
    <dbReference type="NCBI Taxonomy" id="177416"/>
    <lineage>
        <taxon>Bacteria</taxon>
        <taxon>Pseudomonadati</taxon>
        <taxon>Pseudomonadota</taxon>
        <taxon>Gammaproteobacteria</taxon>
        <taxon>Thiotrichales</taxon>
        <taxon>Francisellaceae</taxon>
        <taxon>Francisella</taxon>
    </lineage>
</organism>
<dbReference type="EC" id="2.5.1.31" evidence="1"/>
<dbReference type="EMBL" id="AJ749949">
    <property type="protein sequence ID" value="CAG44950.1"/>
    <property type="molecule type" value="Genomic_DNA"/>
</dbReference>
<dbReference type="RefSeq" id="YP_169366.1">
    <property type="nucleotide sequence ID" value="NC_006570.2"/>
</dbReference>
<dbReference type="SMR" id="Q5NHX6"/>
<dbReference type="STRING" id="177416.FTT_0317"/>
<dbReference type="DNASU" id="3191904"/>
<dbReference type="EnsemblBacteria" id="CAG44950">
    <property type="protein sequence ID" value="CAG44950"/>
    <property type="gene ID" value="FTT_0317"/>
</dbReference>
<dbReference type="KEGG" id="ftu:FTT_0317"/>
<dbReference type="eggNOG" id="COG0020">
    <property type="taxonomic scope" value="Bacteria"/>
</dbReference>
<dbReference type="OrthoDB" id="4191603at2"/>
<dbReference type="Proteomes" id="UP000001174">
    <property type="component" value="Chromosome"/>
</dbReference>
<dbReference type="GO" id="GO:0005829">
    <property type="term" value="C:cytosol"/>
    <property type="evidence" value="ECO:0007669"/>
    <property type="project" value="TreeGrafter"/>
</dbReference>
<dbReference type="GO" id="GO:0008834">
    <property type="term" value="F:ditrans,polycis-undecaprenyl-diphosphate synthase [(2E,6E)-farnesyl-diphosphate specific] activity"/>
    <property type="evidence" value="ECO:0007669"/>
    <property type="project" value="UniProtKB-UniRule"/>
</dbReference>
<dbReference type="GO" id="GO:0000287">
    <property type="term" value="F:magnesium ion binding"/>
    <property type="evidence" value="ECO:0007669"/>
    <property type="project" value="UniProtKB-UniRule"/>
</dbReference>
<dbReference type="GO" id="GO:0071555">
    <property type="term" value="P:cell wall organization"/>
    <property type="evidence" value="ECO:0007669"/>
    <property type="project" value="UniProtKB-KW"/>
</dbReference>
<dbReference type="GO" id="GO:0009252">
    <property type="term" value="P:peptidoglycan biosynthetic process"/>
    <property type="evidence" value="ECO:0007669"/>
    <property type="project" value="UniProtKB-UniRule"/>
</dbReference>
<dbReference type="GO" id="GO:0016094">
    <property type="term" value="P:polyprenol biosynthetic process"/>
    <property type="evidence" value="ECO:0007669"/>
    <property type="project" value="TreeGrafter"/>
</dbReference>
<dbReference type="GO" id="GO:0008360">
    <property type="term" value="P:regulation of cell shape"/>
    <property type="evidence" value="ECO:0007669"/>
    <property type="project" value="UniProtKB-KW"/>
</dbReference>
<dbReference type="CDD" id="cd00475">
    <property type="entry name" value="Cis_IPPS"/>
    <property type="match status" value="1"/>
</dbReference>
<dbReference type="FunFam" id="3.40.1180.10:FF:000001">
    <property type="entry name" value="(2E,6E)-farnesyl-diphosphate-specific ditrans,polycis-undecaprenyl-diphosphate synthase"/>
    <property type="match status" value="1"/>
</dbReference>
<dbReference type="Gene3D" id="3.40.1180.10">
    <property type="entry name" value="Decaprenyl diphosphate synthase-like"/>
    <property type="match status" value="1"/>
</dbReference>
<dbReference type="HAMAP" id="MF_01139">
    <property type="entry name" value="ISPT"/>
    <property type="match status" value="1"/>
</dbReference>
<dbReference type="InterPro" id="IPR001441">
    <property type="entry name" value="UPP_synth-like"/>
</dbReference>
<dbReference type="InterPro" id="IPR018520">
    <property type="entry name" value="UPP_synth-like_CS"/>
</dbReference>
<dbReference type="InterPro" id="IPR036424">
    <property type="entry name" value="UPP_synth-like_sf"/>
</dbReference>
<dbReference type="NCBIfam" id="TIGR00055">
    <property type="entry name" value="uppS"/>
    <property type="match status" value="1"/>
</dbReference>
<dbReference type="PANTHER" id="PTHR10291:SF0">
    <property type="entry name" value="DEHYDRODOLICHYL DIPHOSPHATE SYNTHASE 2"/>
    <property type="match status" value="1"/>
</dbReference>
<dbReference type="PANTHER" id="PTHR10291">
    <property type="entry name" value="DEHYDRODOLICHYL DIPHOSPHATE SYNTHASE FAMILY MEMBER"/>
    <property type="match status" value="1"/>
</dbReference>
<dbReference type="Pfam" id="PF01255">
    <property type="entry name" value="Prenyltransf"/>
    <property type="match status" value="1"/>
</dbReference>
<dbReference type="SUPFAM" id="SSF64005">
    <property type="entry name" value="Undecaprenyl diphosphate synthase"/>
    <property type="match status" value="1"/>
</dbReference>
<dbReference type="PROSITE" id="PS01066">
    <property type="entry name" value="UPP_SYNTHASE"/>
    <property type="match status" value="1"/>
</dbReference>
<name>UPPS_FRATT</name>